<gene>
    <name type="primary">THPO</name>
</gene>
<keyword id="KW-0202">Cytokine</keyword>
<keyword id="KW-0903">Direct protein sequencing</keyword>
<keyword id="KW-0372">Hormone</keyword>
<keyword id="KW-1185">Reference proteome</keyword>
<keyword id="KW-0964">Secreted</keyword>
<reference key="1">
    <citation type="journal article" date="1994" name="Nature">
        <title>Stimulation of megakaryocytopoiesis and thrombopoiesis by the c-Mpl ligand.</title>
        <authorList>
            <person name="de Sauvage F.J."/>
            <person name="Hass P.E."/>
            <person name="Spencer S.D."/>
            <person name="Malloy B.E."/>
            <person name="Gurney A.L."/>
            <person name="Spencer S.A."/>
            <person name="Darbonne W.C."/>
            <person name="Henzel W.J."/>
            <person name="Wong S.C."/>
            <person name="Kuang W.-J."/>
            <person name="Oles K.J."/>
            <person name="Hultgren B."/>
            <person name="Solberg L.A. Jr."/>
            <person name="Goeddel D.V."/>
            <person name="Eaton D.L."/>
        </authorList>
    </citation>
    <scope>PROTEIN SEQUENCE</scope>
    <source>
        <tissue>Plasma</tissue>
    </source>
</reference>
<comment type="function">
    <text evidence="1">Lineage-specific cytokine affecting the proliferation and maturation of megakaryocytes from their committed progenitor cells. It acts at a late stage of megakaryocyte development. It may be the major physiological regulator of circulating platelets.</text>
</comment>
<comment type="subcellular location">
    <subcellularLocation>
        <location evidence="1">Secreted</location>
    </subcellularLocation>
</comment>
<comment type="domain">
    <text>Two-domain structure with an erythropoietin-like N-terminal and a Ser/Pro/Thr-rich C-terminal.</text>
</comment>
<comment type="similarity">
    <text evidence="2">Belongs to the EPO/TPO family.</text>
</comment>
<protein>
    <recommendedName>
        <fullName>Thrombopoietin</fullName>
    </recommendedName>
    <alternativeName>
        <fullName>C-MPL ligand</fullName>
        <shortName>ML</shortName>
    </alternativeName>
    <alternativeName>
        <fullName>Megakaryocyte colony-stimulating factor</fullName>
    </alternativeName>
    <alternativeName>
        <fullName>Megakaryocyte growth and development factor</fullName>
        <shortName>MGDF</shortName>
    </alternativeName>
</protein>
<feature type="chain" id="PRO_0000147103" description="Thrombopoietin">
    <location>
        <begin position="1"/>
        <end position="26" status="greater than"/>
    </location>
</feature>
<feature type="non-terminal residue">
    <location>
        <position position="26"/>
    </location>
</feature>
<proteinExistence type="evidence at protein level"/>
<organism>
    <name type="scientific">Sus scrofa</name>
    <name type="common">Pig</name>
    <dbReference type="NCBI Taxonomy" id="9823"/>
    <lineage>
        <taxon>Eukaryota</taxon>
        <taxon>Metazoa</taxon>
        <taxon>Chordata</taxon>
        <taxon>Craniata</taxon>
        <taxon>Vertebrata</taxon>
        <taxon>Euteleostomi</taxon>
        <taxon>Mammalia</taxon>
        <taxon>Eutheria</taxon>
        <taxon>Laurasiatheria</taxon>
        <taxon>Artiodactyla</taxon>
        <taxon>Suina</taxon>
        <taxon>Suidae</taxon>
        <taxon>Sus</taxon>
    </lineage>
</organism>
<sequence>SPAPPACDPRLLNKLLRDDHVLHGRL</sequence>
<name>TPO_PIG</name>
<evidence type="ECO:0000250" key="1">
    <source>
        <dbReference type="UniProtKB" id="P40225"/>
    </source>
</evidence>
<evidence type="ECO:0000305" key="2"/>
<dbReference type="SMR" id="P42706"/>
<dbReference type="STRING" id="9823.ENSSSCP00000023667"/>
<dbReference type="PaxDb" id="9823-ENSSSCP00000023667"/>
<dbReference type="eggNOG" id="ENOG502S9T0">
    <property type="taxonomic scope" value="Eukaryota"/>
</dbReference>
<dbReference type="InParanoid" id="P42706"/>
<dbReference type="Proteomes" id="UP000008227">
    <property type="component" value="Unplaced"/>
</dbReference>
<dbReference type="Proteomes" id="UP000314985">
    <property type="component" value="Unplaced"/>
</dbReference>
<dbReference type="Proteomes" id="UP000694570">
    <property type="component" value="Unplaced"/>
</dbReference>
<dbReference type="Proteomes" id="UP000694571">
    <property type="component" value="Unplaced"/>
</dbReference>
<dbReference type="Proteomes" id="UP000694720">
    <property type="component" value="Unplaced"/>
</dbReference>
<dbReference type="Proteomes" id="UP000694722">
    <property type="component" value="Unplaced"/>
</dbReference>
<dbReference type="Proteomes" id="UP000694723">
    <property type="component" value="Unplaced"/>
</dbReference>
<dbReference type="Proteomes" id="UP000694724">
    <property type="component" value="Unplaced"/>
</dbReference>
<dbReference type="Proteomes" id="UP000694725">
    <property type="component" value="Unplaced"/>
</dbReference>
<dbReference type="Proteomes" id="UP000694726">
    <property type="component" value="Unplaced"/>
</dbReference>
<dbReference type="Proteomes" id="UP000694727">
    <property type="component" value="Unplaced"/>
</dbReference>
<dbReference type="Proteomes" id="UP000694728">
    <property type="component" value="Unplaced"/>
</dbReference>
<dbReference type="GO" id="GO:0005576">
    <property type="term" value="C:extracellular region"/>
    <property type="evidence" value="ECO:0000304"/>
    <property type="project" value="Reactome"/>
</dbReference>
<dbReference type="GO" id="GO:0005615">
    <property type="term" value="C:extracellular space"/>
    <property type="evidence" value="ECO:0007669"/>
    <property type="project" value="UniProtKB-KW"/>
</dbReference>
<dbReference type="GO" id="GO:0005125">
    <property type="term" value="F:cytokine activity"/>
    <property type="evidence" value="ECO:0007669"/>
    <property type="project" value="UniProtKB-KW"/>
</dbReference>
<dbReference type="GO" id="GO:0005179">
    <property type="term" value="F:hormone activity"/>
    <property type="evidence" value="ECO:0007669"/>
    <property type="project" value="UniProtKB-KW"/>
</dbReference>
<dbReference type="GO" id="GO:0030219">
    <property type="term" value="P:megakaryocyte differentiation"/>
    <property type="evidence" value="ECO:0000250"/>
    <property type="project" value="UniProtKB"/>
</dbReference>
<dbReference type="GO" id="GO:0070374">
    <property type="term" value="P:positive regulation of ERK1 and ERK2 cascade"/>
    <property type="evidence" value="ECO:0000250"/>
    <property type="project" value="UniProtKB"/>
</dbReference>
<dbReference type="GO" id="GO:0045654">
    <property type="term" value="P:positive regulation of megakaryocyte differentiation"/>
    <property type="evidence" value="ECO:0000250"/>
    <property type="project" value="UniProtKB"/>
</dbReference>
<dbReference type="GO" id="GO:0051897">
    <property type="term" value="P:positive regulation of phosphatidylinositol 3-kinase/protein kinase B signal transduction"/>
    <property type="evidence" value="ECO:0000250"/>
    <property type="project" value="UniProtKB"/>
</dbReference>
<dbReference type="GO" id="GO:0001934">
    <property type="term" value="P:positive regulation of protein phosphorylation"/>
    <property type="evidence" value="ECO:0000250"/>
    <property type="project" value="UniProtKB"/>
</dbReference>
<dbReference type="GO" id="GO:0038163">
    <property type="term" value="P:thrombopoietin-mediated signaling pathway"/>
    <property type="evidence" value="ECO:0000250"/>
    <property type="project" value="UniProtKB"/>
</dbReference>
<dbReference type="InterPro" id="IPR009079">
    <property type="entry name" value="4_helix_cytokine-like_core"/>
</dbReference>
<dbReference type="SUPFAM" id="SSF47266">
    <property type="entry name" value="4-helical cytokines"/>
    <property type="match status" value="1"/>
</dbReference>
<accession>P42706</accession>